<accession>O14466</accession>
<evidence type="ECO:0000250" key="1">
    <source>
        <dbReference type="UniProtKB" id="O60762"/>
    </source>
</evidence>
<evidence type="ECO:0000250" key="2">
    <source>
        <dbReference type="UniProtKB" id="Q8U4M3"/>
    </source>
</evidence>
<evidence type="ECO:0000305" key="3"/>
<evidence type="ECO:0000312" key="4">
    <source>
        <dbReference type="PomBase" id="SPAC31G5.16c"/>
    </source>
</evidence>
<comment type="function">
    <text evidence="1">Transfers mannose from GDP-mannose to dolichol monophosphate to form dolichol phosphate mannose (Dol-P-Man) which is the mannosyl donor in pathways leading to N-glycosylation, glycosyl phosphatidylinositol membrane anchoring, and O-mannosylation of proteins.</text>
</comment>
<comment type="catalytic activity">
    <reaction evidence="1">
        <text>a di-trans,poly-cis-dolichyl phosphate + GDP-alpha-D-mannose = a di-trans,poly-cis-dolichyl beta-D-mannosyl phosphate + GDP</text>
        <dbReference type="Rhea" id="RHEA:21184"/>
        <dbReference type="Rhea" id="RHEA-COMP:19498"/>
        <dbReference type="Rhea" id="RHEA-COMP:19501"/>
        <dbReference type="ChEBI" id="CHEBI:57527"/>
        <dbReference type="ChEBI" id="CHEBI:57683"/>
        <dbReference type="ChEBI" id="CHEBI:58189"/>
        <dbReference type="ChEBI" id="CHEBI:58211"/>
        <dbReference type="EC" id="2.4.1.83"/>
    </reaction>
</comment>
<comment type="cofactor">
    <cofactor evidence="2">
        <name>Mg(2+)</name>
        <dbReference type="ChEBI" id="CHEBI:18420"/>
    </cofactor>
    <cofactor evidence="2">
        <name>Mn(2+)</name>
        <dbReference type="ChEBI" id="CHEBI:29035"/>
    </cofactor>
    <cofactor evidence="2">
        <name>Ca(2+)</name>
        <dbReference type="ChEBI" id="CHEBI:29108"/>
    </cofactor>
    <text evidence="2">Binds 1 divalent metal cation.</text>
</comment>
<comment type="pathway">
    <text evidence="1">Protein modification; protein glycosylation.</text>
</comment>
<comment type="subunit">
    <text evidence="1">Component of the dolichol-phosphate mannose (DPM) synthase complex composed of dpm1, dpm2 and dpm3.</text>
</comment>
<comment type="subcellular location">
    <subcellularLocation>
        <location>Endoplasmic reticulum</location>
    </subcellularLocation>
</comment>
<comment type="similarity">
    <text evidence="3">Belongs to the glycosyltransferase 2 family.</text>
</comment>
<gene>
    <name evidence="4" type="primary">dpm1</name>
    <name evidence="4" type="ORF">SPAC31G5.16c</name>
</gene>
<reference key="1">
    <citation type="journal article" date="1997" name="Proc. Natl. Acad. Sci. U.S.A.">
        <title>Human and Saccharomyces cerevisiae dolichol phosphate mannose synthases represent two classes of the enzyme, but both function in Schizosaccharomyces pombe.</title>
        <authorList>
            <person name="Colussi P.A."/>
            <person name="Taron C.H."/>
            <person name="Mack J.C."/>
            <person name="Orlean P."/>
        </authorList>
    </citation>
    <scope>NUCLEOTIDE SEQUENCE [MRNA]</scope>
</reference>
<reference key="2">
    <citation type="journal article" date="2002" name="Nature">
        <title>The genome sequence of Schizosaccharomyces pombe.</title>
        <authorList>
            <person name="Wood V."/>
            <person name="Gwilliam R."/>
            <person name="Rajandream M.A."/>
            <person name="Lyne M.H."/>
            <person name="Lyne R."/>
            <person name="Stewart A."/>
            <person name="Sgouros J.G."/>
            <person name="Peat N."/>
            <person name="Hayles J."/>
            <person name="Baker S.G."/>
            <person name="Basham D."/>
            <person name="Bowman S."/>
            <person name="Brooks K."/>
            <person name="Brown D."/>
            <person name="Brown S."/>
            <person name="Chillingworth T."/>
            <person name="Churcher C.M."/>
            <person name="Collins M."/>
            <person name="Connor R."/>
            <person name="Cronin A."/>
            <person name="Davis P."/>
            <person name="Feltwell T."/>
            <person name="Fraser A."/>
            <person name="Gentles S."/>
            <person name="Goble A."/>
            <person name="Hamlin N."/>
            <person name="Harris D.E."/>
            <person name="Hidalgo J."/>
            <person name="Hodgson G."/>
            <person name="Holroyd S."/>
            <person name="Hornsby T."/>
            <person name="Howarth S."/>
            <person name="Huckle E.J."/>
            <person name="Hunt S."/>
            <person name="Jagels K."/>
            <person name="James K.D."/>
            <person name="Jones L."/>
            <person name="Jones M."/>
            <person name="Leather S."/>
            <person name="McDonald S."/>
            <person name="McLean J."/>
            <person name="Mooney P."/>
            <person name="Moule S."/>
            <person name="Mungall K.L."/>
            <person name="Murphy L.D."/>
            <person name="Niblett D."/>
            <person name="Odell C."/>
            <person name="Oliver K."/>
            <person name="O'Neil S."/>
            <person name="Pearson D."/>
            <person name="Quail M.A."/>
            <person name="Rabbinowitsch E."/>
            <person name="Rutherford K.M."/>
            <person name="Rutter S."/>
            <person name="Saunders D."/>
            <person name="Seeger K."/>
            <person name="Sharp S."/>
            <person name="Skelton J."/>
            <person name="Simmonds M.N."/>
            <person name="Squares R."/>
            <person name="Squares S."/>
            <person name="Stevens K."/>
            <person name="Taylor K."/>
            <person name="Taylor R.G."/>
            <person name="Tivey A."/>
            <person name="Walsh S.V."/>
            <person name="Warren T."/>
            <person name="Whitehead S."/>
            <person name="Woodward J.R."/>
            <person name="Volckaert G."/>
            <person name="Aert R."/>
            <person name="Robben J."/>
            <person name="Grymonprez B."/>
            <person name="Weltjens I."/>
            <person name="Vanstreels E."/>
            <person name="Rieger M."/>
            <person name="Schaefer M."/>
            <person name="Mueller-Auer S."/>
            <person name="Gabel C."/>
            <person name="Fuchs M."/>
            <person name="Duesterhoeft A."/>
            <person name="Fritzc C."/>
            <person name="Holzer E."/>
            <person name="Moestl D."/>
            <person name="Hilbert H."/>
            <person name="Borzym K."/>
            <person name="Langer I."/>
            <person name="Beck A."/>
            <person name="Lehrach H."/>
            <person name="Reinhardt R."/>
            <person name="Pohl T.M."/>
            <person name="Eger P."/>
            <person name="Zimmermann W."/>
            <person name="Wedler H."/>
            <person name="Wambutt R."/>
            <person name="Purnelle B."/>
            <person name="Goffeau A."/>
            <person name="Cadieu E."/>
            <person name="Dreano S."/>
            <person name="Gloux S."/>
            <person name="Lelaure V."/>
            <person name="Mottier S."/>
            <person name="Galibert F."/>
            <person name="Aves S.J."/>
            <person name="Xiang Z."/>
            <person name="Hunt C."/>
            <person name="Moore K."/>
            <person name="Hurst S.M."/>
            <person name="Lucas M."/>
            <person name="Rochet M."/>
            <person name="Gaillardin C."/>
            <person name="Tallada V.A."/>
            <person name="Garzon A."/>
            <person name="Thode G."/>
            <person name="Daga R.R."/>
            <person name="Cruzado L."/>
            <person name="Jimenez J."/>
            <person name="Sanchez M."/>
            <person name="del Rey F."/>
            <person name="Benito J."/>
            <person name="Dominguez A."/>
            <person name="Revuelta J.L."/>
            <person name="Moreno S."/>
            <person name="Armstrong J."/>
            <person name="Forsburg S.L."/>
            <person name="Cerutti L."/>
            <person name="Lowe T."/>
            <person name="McCombie W.R."/>
            <person name="Paulsen I."/>
            <person name="Potashkin J."/>
            <person name="Shpakovski G.V."/>
            <person name="Ussery D."/>
            <person name="Barrell B.G."/>
            <person name="Nurse P."/>
        </authorList>
    </citation>
    <scope>NUCLEOTIDE SEQUENCE [LARGE SCALE GENOMIC DNA]</scope>
    <source>
        <strain>972 / ATCC 24843</strain>
    </source>
</reference>
<organism>
    <name type="scientific">Schizosaccharomyces pombe (strain 972 / ATCC 24843)</name>
    <name type="common">Fission yeast</name>
    <dbReference type="NCBI Taxonomy" id="284812"/>
    <lineage>
        <taxon>Eukaryota</taxon>
        <taxon>Fungi</taxon>
        <taxon>Dikarya</taxon>
        <taxon>Ascomycota</taxon>
        <taxon>Taphrinomycotina</taxon>
        <taxon>Schizosaccharomycetes</taxon>
        <taxon>Schizosaccharomycetales</taxon>
        <taxon>Schizosaccharomycetaceae</taxon>
        <taxon>Schizosaccharomyces</taxon>
    </lineage>
</organism>
<dbReference type="EC" id="2.4.1.83" evidence="1"/>
<dbReference type="EMBL" id="AF007873">
    <property type="protein sequence ID" value="AAC98795.1"/>
    <property type="molecule type" value="mRNA"/>
</dbReference>
<dbReference type="EMBL" id="CU329670">
    <property type="protein sequence ID" value="CAB11700.1"/>
    <property type="molecule type" value="Genomic_DNA"/>
</dbReference>
<dbReference type="PIR" id="T38633">
    <property type="entry name" value="T38633"/>
</dbReference>
<dbReference type="RefSeq" id="NP_594017.1">
    <property type="nucleotide sequence ID" value="NM_001019443.2"/>
</dbReference>
<dbReference type="SMR" id="O14466"/>
<dbReference type="BioGRID" id="279553">
    <property type="interactions" value="2"/>
</dbReference>
<dbReference type="FunCoup" id="O14466">
    <property type="interactions" value="528"/>
</dbReference>
<dbReference type="STRING" id="284812.O14466"/>
<dbReference type="CAZy" id="GT2">
    <property type="family name" value="Glycosyltransferase Family 2"/>
</dbReference>
<dbReference type="iPTMnet" id="O14466"/>
<dbReference type="PaxDb" id="4896-SPAC31G5.16c.1"/>
<dbReference type="EnsemblFungi" id="SPAC31G5.16c.1">
    <property type="protein sequence ID" value="SPAC31G5.16c.1:pep"/>
    <property type="gene ID" value="SPAC31G5.16c"/>
</dbReference>
<dbReference type="GeneID" id="2543121"/>
<dbReference type="KEGG" id="spo:2543121"/>
<dbReference type="PomBase" id="SPAC31G5.16c">
    <property type="gene designation" value="dpm1"/>
</dbReference>
<dbReference type="VEuPathDB" id="FungiDB:SPAC31G5.16c"/>
<dbReference type="eggNOG" id="KOG2978">
    <property type="taxonomic scope" value="Eukaryota"/>
</dbReference>
<dbReference type="HOGENOM" id="CLU_033536_13_3_1"/>
<dbReference type="InParanoid" id="O14466"/>
<dbReference type="OMA" id="KCFRREV"/>
<dbReference type="PhylomeDB" id="O14466"/>
<dbReference type="UniPathway" id="UPA00378"/>
<dbReference type="PRO" id="PR:O14466"/>
<dbReference type="Proteomes" id="UP000002485">
    <property type="component" value="Chromosome I"/>
</dbReference>
<dbReference type="GO" id="GO:0005737">
    <property type="term" value="C:cytoplasm"/>
    <property type="evidence" value="ECO:0007005"/>
    <property type="project" value="PomBase"/>
</dbReference>
<dbReference type="GO" id="GO:0033185">
    <property type="term" value="C:dolichol-phosphate-mannose synthase complex"/>
    <property type="evidence" value="ECO:0000266"/>
    <property type="project" value="PomBase"/>
</dbReference>
<dbReference type="GO" id="GO:0005783">
    <property type="term" value="C:endoplasmic reticulum"/>
    <property type="evidence" value="ECO:0007005"/>
    <property type="project" value="PomBase"/>
</dbReference>
<dbReference type="GO" id="GO:0005789">
    <property type="term" value="C:endoplasmic reticulum membrane"/>
    <property type="evidence" value="ECO:0000318"/>
    <property type="project" value="GO_Central"/>
</dbReference>
<dbReference type="GO" id="GO:0004582">
    <property type="term" value="F:dolichyl-phosphate beta-D-mannosyltransferase activity"/>
    <property type="evidence" value="ECO:0000250"/>
    <property type="project" value="UniProtKB"/>
</dbReference>
<dbReference type="GO" id="GO:0046872">
    <property type="term" value="F:metal ion binding"/>
    <property type="evidence" value="ECO:0000250"/>
    <property type="project" value="UniProtKB"/>
</dbReference>
<dbReference type="GO" id="GO:0180047">
    <property type="term" value="P:dolichol phosphate mannose biosynthetic process"/>
    <property type="evidence" value="ECO:0000250"/>
    <property type="project" value="UniProtKB"/>
</dbReference>
<dbReference type="GO" id="GO:0006488">
    <property type="term" value="P:dolichol-linked oligosaccharide biosynthetic process"/>
    <property type="evidence" value="ECO:0000318"/>
    <property type="project" value="GO_Central"/>
</dbReference>
<dbReference type="GO" id="GO:0006506">
    <property type="term" value="P:GPI anchor biosynthetic process"/>
    <property type="evidence" value="ECO:0000318"/>
    <property type="project" value="GO_Central"/>
</dbReference>
<dbReference type="GO" id="GO:0035269">
    <property type="term" value="P:protein O-linked mannosylation"/>
    <property type="evidence" value="ECO:0000250"/>
    <property type="project" value="UniProtKB"/>
</dbReference>
<dbReference type="CDD" id="cd06442">
    <property type="entry name" value="DPM1_like"/>
    <property type="match status" value="1"/>
</dbReference>
<dbReference type="FunFam" id="3.90.550.10:FF:000036">
    <property type="entry name" value="Dolichol-phosphate mannosyltransferase subunit 1"/>
    <property type="match status" value="1"/>
</dbReference>
<dbReference type="Gene3D" id="3.90.550.10">
    <property type="entry name" value="Spore Coat Polysaccharide Biosynthesis Protein SpsA, Chain A"/>
    <property type="match status" value="1"/>
</dbReference>
<dbReference type="InterPro" id="IPR039528">
    <property type="entry name" value="DPM1-like"/>
</dbReference>
<dbReference type="InterPro" id="IPR001173">
    <property type="entry name" value="Glyco_trans_2-like"/>
</dbReference>
<dbReference type="InterPro" id="IPR029044">
    <property type="entry name" value="Nucleotide-diphossugar_trans"/>
</dbReference>
<dbReference type="PANTHER" id="PTHR43398">
    <property type="entry name" value="DOLICHOL-PHOSPHATE MANNOSYLTRANSFERASE SUBUNIT 1"/>
    <property type="match status" value="1"/>
</dbReference>
<dbReference type="PANTHER" id="PTHR43398:SF1">
    <property type="entry name" value="DOLICHOL-PHOSPHATE MANNOSYLTRANSFERASE SUBUNIT 1"/>
    <property type="match status" value="1"/>
</dbReference>
<dbReference type="Pfam" id="PF00535">
    <property type="entry name" value="Glycos_transf_2"/>
    <property type="match status" value="1"/>
</dbReference>
<dbReference type="SUPFAM" id="SSF53448">
    <property type="entry name" value="Nucleotide-diphospho-sugar transferases"/>
    <property type="match status" value="1"/>
</dbReference>
<proteinExistence type="evidence at transcript level"/>
<sequence length="236" mass="26672">MSKYSVLLPTYNERKNLPIITYLIAKTFDQEKLDWEIVIIDDASPDGTQEVAKELQKIYGEDKILLKPRSGKLGLGTAYIHGLKFATGDFVIIMDADFSHHPKYLPEFIKLQKEHNYDIVLGTRYAKDGGVYGWNLKRKFISRGANLLASTVLGTGVSDVTGSFRLYKKPVLETLMSEVTSKGYVFQMEIIARAREHNYTIGEVPIAFVDRLYGESKLGMDDILGYLKGVFSLLFI</sequence>
<keyword id="KW-0256">Endoplasmic reticulum</keyword>
<keyword id="KW-0328">Glycosyltransferase</keyword>
<keyword id="KW-0460">Magnesium</keyword>
<keyword id="KW-0464">Manganese</keyword>
<keyword id="KW-0479">Metal-binding</keyword>
<keyword id="KW-1185">Reference proteome</keyword>
<keyword id="KW-0808">Transferase</keyword>
<feature type="chain" id="PRO_0000059173" description="Dolichol-phosphate mannosyltransferase">
    <location>
        <begin position="1"/>
        <end position="236"/>
    </location>
</feature>
<feature type="binding site" evidence="2">
    <location>
        <position position="9"/>
    </location>
    <ligand>
        <name>GDP-alpha-D-mannose</name>
        <dbReference type="ChEBI" id="CHEBI:57527"/>
    </ligand>
</feature>
<feature type="binding site" evidence="2">
    <location>
        <position position="11"/>
    </location>
    <ligand>
        <name>GDP-alpha-D-mannose</name>
        <dbReference type="ChEBI" id="CHEBI:57527"/>
    </ligand>
</feature>
<feature type="binding site" evidence="2">
    <location>
        <position position="13"/>
    </location>
    <ligand>
        <name>GDP-alpha-D-mannose</name>
        <dbReference type="ChEBI" id="CHEBI:57527"/>
    </ligand>
</feature>
<feature type="binding site" evidence="2">
    <location>
        <position position="40"/>
    </location>
    <ligand>
        <name>GDP-alpha-D-mannose</name>
        <dbReference type="ChEBI" id="CHEBI:57527"/>
    </ligand>
</feature>
<feature type="binding site" evidence="2">
    <location>
        <position position="42"/>
    </location>
    <ligand>
        <name>GDP-alpha-D-mannose</name>
        <dbReference type="ChEBI" id="CHEBI:57527"/>
    </ligand>
</feature>
<feature type="binding site" evidence="2">
    <location>
        <position position="95"/>
    </location>
    <ligand>
        <name>GDP-alpha-D-mannose</name>
        <dbReference type="ChEBI" id="CHEBI:57527"/>
    </ligand>
</feature>
<feature type="binding site" evidence="2">
    <location>
        <position position="96"/>
    </location>
    <ligand>
        <name>GDP-alpha-D-mannose</name>
        <dbReference type="ChEBI" id="CHEBI:57527"/>
    </ligand>
</feature>
<feature type="binding site" evidence="2">
    <location>
        <position position="97"/>
    </location>
    <ligand>
        <name>GDP-alpha-D-mannose</name>
        <dbReference type="ChEBI" id="CHEBI:57527"/>
    </ligand>
</feature>
<feature type="binding site" evidence="2">
    <location>
        <position position="97"/>
    </location>
    <ligand>
        <name>Mg(2+)</name>
        <dbReference type="ChEBI" id="CHEBI:18420"/>
    </ligand>
</feature>
<feature type="binding site" evidence="2">
    <location>
        <position position="97"/>
    </location>
    <ligand>
        <name>Mn(2+)</name>
        <dbReference type="ChEBI" id="CHEBI:29035"/>
    </ligand>
</feature>
<feature type="binding site" evidence="2">
    <location>
        <position position="124"/>
    </location>
    <ligand>
        <name>GDP-alpha-D-mannose</name>
        <dbReference type="ChEBI" id="CHEBI:57527"/>
    </ligand>
</feature>
<feature type="binding site" evidence="2">
    <location>
        <position position="160"/>
    </location>
    <ligand>
        <name>GDP-alpha-D-mannose</name>
        <dbReference type="ChEBI" id="CHEBI:57527"/>
    </ligand>
</feature>
<feature type="binding site" evidence="2">
    <location>
        <position position="211"/>
    </location>
    <ligand>
        <name>GDP-alpha-D-mannose</name>
        <dbReference type="ChEBI" id="CHEBI:57527"/>
    </ligand>
</feature>
<feature type="binding site" evidence="2">
    <location>
        <position position="217"/>
    </location>
    <ligand>
        <name>GDP-alpha-D-mannose</name>
        <dbReference type="ChEBI" id="CHEBI:57527"/>
    </ligand>
</feature>
<name>DPM1_SCHPO</name>
<protein>
    <recommendedName>
        <fullName>Dolichol-phosphate mannosyltransferase</fullName>
        <ecNumber evidence="1">2.4.1.83</ecNumber>
    </recommendedName>
    <alternativeName>
        <fullName>Dolichol-phosphate mannose synthase</fullName>
        <shortName>DPM synthase</shortName>
    </alternativeName>
    <alternativeName>
        <fullName>Dolichyl-phosphate beta-D-mannosyltransferase</fullName>
    </alternativeName>
    <alternativeName>
        <fullName>Mannose-P-dolichol synthase</fullName>
        <shortName>MPD synthase</shortName>
    </alternativeName>
</protein>